<comment type="function">
    <text evidence="3 4">Essential for aminobenzoyl-glutamate utilization. It catalyzes the concentration-dependent uptake of p-aminobenzoyl-glutamate (PABA-GLU) into the cell and allows accumulation of PABA-GLU to a concentration enabling AbgAB to catalyze cleavage into p-aminobenzoate and glutamate. It also seems to increase the sensitivity to low levels of aminobenzoyl-glutamate. May actually serve physiologically as a transporter for some other molecule, perhaps a dipeptide, and that it transports p-aminobenzoyl-glutamate as a secondary activity. The physiological role of abgABT should be clarified.</text>
</comment>
<comment type="catalytic activity">
    <reaction evidence="8">
        <text>N-(4-aminobenzoyl)-L-glutamate(in) + H(+)(in) = N-(4-aminobenzoyl)-L-glutamate(out) + H(+)(out)</text>
        <dbReference type="Rhea" id="RHEA:28711"/>
        <dbReference type="ChEBI" id="CHEBI:15378"/>
        <dbReference type="ChEBI" id="CHEBI:60903"/>
    </reaction>
</comment>
<comment type="activity regulation">
    <text evidence="3">Completely inhibited by 100 nM sodium azide and by the proton ionophore carbonyl cyanide m-chlorophenylhydrazone (CCCP) (PubMed:17307853). Is also strongly inhibited by 100 mM potassium fluoride (PubMed:17307853).</text>
</comment>
<comment type="subcellular location">
    <subcellularLocation>
        <location evidence="2">Cell inner membrane</location>
        <topology evidence="1">Multi-pass membrane protein</topology>
    </subcellularLocation>
</comment>
<comment type="induction">
    <text evidence="5">Could be transcriptionally regulated by AbgR.</text>
</comment>
<comment type="disruption phenotype">
    <text evidence="5">Cells lacking this gene loss the p-aminobenzoyl-glutamate utilization phenotype.</text>
</comment>
<comment type="miscellaneous">
    <text evidence="9">It is suggested that in wild-type strain abgT would normally be cryptic or not expressed under conditions of growth on minimal medium. Altering the expression of abgT from its wild-type context appears to be the mechanism for obtaining the growth phenotype (PubMed:9829935).</text>
</comment>
<evidence type="ECO:0000255" key="1"/>
<evidence type="ECO:0000269" key="2">
    <source>
    </source>
</evidence>
<evidence type="ECO:0000269" key="3">
    <source>
    </source>
</evidence>
<evidence type="ECO:0000269" key="4">
    <source>
    </source>
</evidence>
<evidence type="ECO:0000269" key="5">
    <source>
    </source>
</evidence>
<evidence type="ECO:0000303" key="6">
    <source>
    </source>
</evidence>
<evidence type="ECO:0000305" key="7"/>
<evidence type="ECO:0000305" key="8">
    <source>
    </source>
</evidence>
<evidence type="ECO:0000305" key="9">
    <source>
    </source>
</evidence>
<sequence length="508" mass="54886">MSMSSIPSSSQSGKLYGWVERIGNKVPHPFLLFIYLIIVLMVTTAILSAFGVSAKNPTDGTPVVVKNLLSVEGLHWFLPNVIKNFSGFAPLGAILALVLGAGLAERVGLLPALMVKMASHVNARYASYMVLFIAFFSHISSDAALVIMPPMGALIFLAVGRHPVAGLLAAIAGVGCGFTANLLIVTTDVLLSGISTEAAAAFNPQMHVSVIDNWYFMASSVVVLTIVGGLITDKIIEPRLGQWQGNSDEKLQTLTESQRFGLRIAGVVSLLFIAAIALMVIPQNGILRDPINHTVMPSPFIKGIVPLIILFFFVVSLAYGIATRTIRRQADLPHLMIEPMKEMAGFIVMVFPLAQFVAMFNWSNMGKFIAVGLTDILESSGLSGIPAFVGLALLSSFLCMFIASGSAIWSILAPIFVPMFMLLGFHPAFAQILFRIADSSVLPLAPVSPFVPLFLGFLQRYKPDAKLGTYYSLVLPYPLIFLVVWLLMLLAWYLVGLPIGPGIYPRLS</sequence>
<feature type="chain" id="PRO_0000064422" description="p-aminobenzoyl-glutamate transport protein">
    <location>
        <begin position="1"/>
        <end position="508"/>
    </location>
</feature>
<feature type="transmembrane region" description="Helical" evidence="1">
    <location>
        <begin position="30"/>
        <end position="50"/>
    </location>
</feature>
<feature type="transmembrane region" description="Helical" evidence="1">
    <location>
        <begin position="85"/>
        <end position="105"/>
    </location>
</feature>
<feature type="transmembrane region" description="Helical" evidence="1">
    <location>
        <begin position="121"/>
        <end position="139"/>
    </location>
</feature>
<feature type="transmembrane region" description="Helical" evidence="1">
    <location>
        <begin position="140"/>
        <end position="159"/>
    </location>
</feature>
<feature type="transmembrane region" description="Helical" evidence="1">
    <location>
        <begin position="164"/>
        <end position="184"/>
    </location>
</feature>
<feature type="transmembrane region" description="Helical" evidence="1">
    <location>
        <begin position="211"/>
        <end position="231"/>
    </location>
</feature>
<feature type="transmembrane region" description="Helical" evidence="1">
    <location>
        <begin position="261"/>
        <end position="281"/>
    </location>
</feature>
<feature type="transmembrane region" description="Helical" evidence="1">
    <location>
        <begin position="303"/>
        <end position="323"/>
    </location>
</feature>
<feature type="transmembrane region" description="Helical" evidence="1">
    <location>
        <begin position="343"/>
        <end position="363"/>
    </location>
</feature>
<feature type="transmembrane region" description="Helical" evidence="1">
    <location>
        <begin position="382"/>
        <end position="402"/>
    </location>
</feature>
<feature type="transmembrane region" description="Helical" evidence="1">
    <location>
        <begin position="405"/>
        <end position="425"/>
    </location>
</feature>
<feature type="transmembrane region" description="Helical" evidence="1">
    <location>
        <begin position="439"/>
        <end position="459"/>
    </location>
</feature>
<feature type="transmembrane region" description="Helical" evidence="1">
    <location>
        <begin position="479"/>
        <end position="499"/>
    </location>
</feature>
<feature type="sequence conflict" description="In Ref. 2; BAA14929." evidence="7" ref="2">
    <original>Y</original>
    <variation>S</variation>
    <location>
        <position position="504"/>
    </location>
</feature>
<protein>
    <recommendedName>
        <fullName>p-aminobenzoyl-glutamate transport protein</fullName>
    </recommendedName>
    <alternativeName>
        <fullName>PABA-GLU transport protein</fullName>
    </alternativeName>
</protein>
<proteinExistence type="evidence at protein level"/>
<reference key="1">
    <citation type="journal article" date="1998" name="J. Bacteriol.">
        <title>Characterization of mutations that allow p-aminobenzoyl-glutamate utilization by Escherichia coli.</title>
        <authorList>
            <person name="Hussein M.J."/>
            <person name="Green J.M."/>
            <person name="Nichols B.P."/>
        </authorList>
    </citation>
    <scope>NUCLEOTIDE SEQUENCE [GENOMIC DNA]</scope>
    <scope>DISRUPTION PHENOTYPE</scope>
    <scope>INDUCTION</scope>
    <source>
        <strain>BN1001</strain>
        <strain>BN1003</strain>
    </source>
</reference>
<reference key="2">
    <citation type="journal article" date="1996" name="DNA Res.">
        <title>A 570-kb DNA sequence of the Escherichia coli K-12 genome corresponding to the 28.0-40.1 min region on the linkage map.</title>
        <authorList>
            <person name="Aiba H."/>
            <person name="Baba T."/>
            <person name="Fujita K."/>
            <person name="Hayashi K."/>
            <person name="Inada T."/>
            <person name="Isono K."/>
            <person name="Itoh T."/>
            <person name="Kasai H."/>
            <person name="Kashimoto K."/>
            <person name="Kimura S."/>
            <person name="Kitakawa M."/>
            <person name="Kitagawa M."/>
            <person name="Makino K."/>
            <person name="Miki T."/>
            <person name="Mizobuchi K."/>
            <person name="Mori H."/>
            <person name="Mori T."/>
            <person name="Motomura K."/>
            <person name="Nakade S."/>
            <person name="Nakamura Y."/>
            <person name="Nashimoto H."/>
            <person name="Nishio Y."/>
            <person name="Oshima T."/>
            <person name="Saito N."/>
            <person name="Sampei G."/>
            <person name="Seki Y."/>
            <person name="Sivasundaram S."/>
            <person name="Tagami H."/>
            <person name="Takeda J."/>
            <person name="Takemoto K."/>
            <person name="Takeuchi Y."/>
            <person name="Wada C."/>
            <person name="Yamamoto Y."/>
            <person name="Horiuchi T."/>
        </authorList>
    </citation>
    <scope>NUCLEOTIDE SEQUENCE [LARGE SCALE GENOMIC DNA]</scope>
    <source>
        <strain>K12 / W3110 / ATCC 27325 / DSM 5911</strain>
    </source>
</reference>
<reference key="3">
    <citation type="journal article" date="1997" name="Science">
        <title>The complete genome sequence of Escherichia coli K-12.</title>
        <authorList>
            <person name="Blattner F.R."/>
            <person name="Plunkett G. III"/>
            <person name="Bloch C.A."/>
            <person name="Perna N.T."/>
            <person name="Burland V."/>
            <person name="Riley M."/>
            <person name="Collado-Vides J."/>
            <person name="Glasner J.D."/>
            <person name="Rode C.K."/>
            <person name="Mayhew G.F."/>
            <person name="Gregor J."/>
            <person name="Davis N.W."/>
            <person name="Kirkpatrick H.A."/>
            <person name="Goeden M.A."/>
            <person name="Rose D.J."/>
            <person name="Mau B."/>
            <person name="Shao Y."/>
        </authorList>
    </citation>
    <scope>NUCLEOTIDE SEQUENCE [LARGE SCALE GENOMIC DNA]</scope>
    <source>
        <strain>K12 / MG1655 / ATCC 47076</strain>
    </source>
</reference>
<reference key="4">
    <citation type="journal article" date="2006" name="Mol. Syst. Biol.">
        <title>Highly accurate genome sequences of Escherichia coli K-12 strains MG1655 and W3110.</title>
        <authorList>
            <person name="Hayashi K."/>
            <person name="Morooka N."/>
            <person name="Yamamoto Y."/>
            <person name="Fujita K."/>
            <person name="Isono K."/>
            <person name="Choi S."/>
            <person name="Ohtsubo E."/>
            <person name="Baba T."/>
            <person name="Wanner B.L."/>
            <person name="Mori H."/>
            <person name="Horiuchi T."/>
        </authorList>
    </citation>
    <scope>NUCLEOTIDE SEQUENCE [LARGE SCALE GENOMIC DNA]</scope>
    <scope>SEQUENCE REVISION TO 504</scope>
    <source>
        <strain>K12 / W3110 / ATCC 27325 / DSM 5911</strain>
    </source>
</reference>
<reference key="5">
    <citation type="journal article" date="1987" name="Nucleic Acids Res.">
        <title>Characterisation and nucleotide sequence of ogt, the O6-alkylguanine-DNA-alkyltransferase gene of E. coli.</title>
        <authorList>
            <person name="Potter P.M."/>
            <person name="Wilkinson M.C."/>
            <person name="Fitton J."/>
            <person name="Carr F.J."/>
            <person name="Brennand J."/>
            <person name="Cooper D.P."/>
            <person name="Margison G.P."/>
        </authorList>
    </citation>
    <scope>NUCLEOTIDE SEQUENCE [GENOMIC DNA] OF 452-508</scope>
</reference>
<reference key="6">
    <citation type="journal article" date="1995" name="Nucleic Acids Res.">
        <title>Detection of new genes in a bacterial genome using Markov models for three gene classes.</title>
        <authorList>
            <person name="Borodovsky M."/>
            <person name="McIninch J."/>
            <person name="Koonin E.V."/>
            <person name="Rudd K.E."/>
            <person name="Medigue C."/>
            <person name="Danchin A."/>
        </authorList>
    </citation>
    <scope>IDENTIFICATION</scope>
</reference>
<reference key="7">
    <citation type="journal article" date="2005" name="Science">
        <title>Global topology analysis of the Escherichia coli inner membrane proteome.</title>
        <authorList>
            <person name="Daley D.O."/>
            <person name="Rapp M."/>
            <person name="Granseth E."/>
            <person name="Melen K."/>
            <person name="Drew D."/>
            <person name="von Heijne G."/>
        </authorList>
    </citation>
    <scope>SUBCELLULAR LOCATION</scope>
    <source>
        <strain>K12 / MG1655 / ATCC 47076</strain>
    </source>
</reference>
<reference key="8">
    <citation type="journal article" date="2007" name="J. Bacteriol.">
        <title>Escherichia coli abg genes enable uptake and cleavage of the folate catabolite p-aminobenzoyl-glutamate.</title>
        <authorList>
            <person name="Carter E.L."/>
            <person name="Jager L."/>
            <person name="Gardner L."/>
            <person name="Hall C.C."/>
            <person name="Willis S."/>
            <person name="Green J.M."/>
        </authorList>
    </citation>
    <scope>FUNCTION AS A TRANSPORT PROTEIN</scope>
    <scope>ACTIVITY REGULATION</scope>
</reference>
<reference key="9">
    <citation type="journal article" date="2010" name="J. Bacteriol.">
        <title>Purification and characterization of the folate catabolic enzyme p-aminobenzoyl-glutamate hydrolase from Escherichia coli.</title>
        <authorList>
            <person name="Green J.M."/>
            <person name="Hollandsworth R."/>
            <person name="Pitstick L."/>
            <person name="Carter E.L."/>
        </authorList>
    </citation>
    <scope>FUNCTION AS A TRANSPORT PROTEIN</scope>
</reference>
<organism>
    <name type="scientific">Escherichia coli (strain K12)</name>
    <dbReference type="NCBI Taxonomy" id="83333"/>
    <lineage>
        <taxon>Bacteria</taxon>
        <taxon>Pseudomonadati</taxon>
        <taxon>Pseudomonadota</taxon>
        <taxon>Gammaproteobacteria</taxon>
        <taxon>Enterobacterales</taxon>
        <taxon>Enterobacteriaceae</taxon>
        <taxon>Escherichia</taxon>
    </lineage>
</organism>
<gene>
    <name evidence="6" type="primary">abgT</name>
    <name type="synonym">ydaH</name>
    <name type="ordered locus">b1336</name>
    <name type="ordered locus">JW5822</name>
    <name type="ORF">ECK1332</name>
</gene>
<accession>P46133</accession>
<accession>P76051</accession>
<accession>P76843</accession>
<accession>P76845</accession>
<name>ABGT_ECOLI</name>
<dbReference type="EMBL" id="U00096">
    <property type="protein sequence ID" value="AAC74418.2"/>
    <property type="molecule type" value="Genomic_DNA"/>
</dbReference>
<dbReference type="EMBL" id="AP009048">
    <property type="protein sequence ID" value="BAA14929.2"/>
    <property type="molecule type" value="Genomic_DNA"/>
</dbReference>
<dbReference type="EMBL" id="Y00495">
    <property type="status" value="NOT_ANNOTATED_CDS"/>
    <property type="molecule type" value="Genomic_DNA"/>
</dbReference>
<dbReference type="PIR" id="C64883">
    <property type="entry name" value="C64883"/>
</dbReference>
<dbReference type="RefSeq" id="NP_415852.2">
    <property type="nucleotide sequence ID" value="NC_000913.3"/>
</dbReference>
<dbReference type="RefSeq" id="WP_000062973.1">
    <property type="nucleotide sequence ID" value="NZ_SSUW01000011.1"/>
</dbReference>
<dbReference type="SMR" id="P46133"/>
<dbReference type="BioGRID" id="4260156">
    <property type="interactions" value="191"/>
</dbReference>
<dbReference type="DIP" id="DIP-9031N"/>
<dbReference type="FunCoup" id="P46133">
    <property type="interactions" value="97"/>
</dbReference>
<dbReference type="IntAct" id="P46133">
    <property type="interactions" value="1"/>
</dbReference>
<dbReference type="STRING" id="511145.b1336"/>
<dbReference type="TCDB" id="2.A.68.1.1">
    <property type="family name" value="the p-aminobenzoyl-glutamate transporter (abgt) family"/>
</dbReference>
<dbReference type="PaxDb" id="511145-b1336"/>
<dbReference type="DNASU" id="945912"/>
<dbReference type="EnsemblBacteria" id="AAC74418">
    <property type="protein sequence ID" value="AAC74418"/>
    <property type="gene ID" value="b1336"/>
</dbReference>
<dbReference type="GeneID" id="945912"/>
<dbReference type="KEGG" id="ecj:JW5822"/>
<dbReference type="KEGG" id="eco:b1336"/>
<dbReference type="PATRIC" id="fig|1411691.4.peg.941"/>
<dbReference type="EchoBASE" id="EB2697"/>
<dbReference type="eggNOG" id="COG2978">
    <property type="taxonomic scope" value="Bacteria"/>
</dbReference>
<dbReference type="HOGENOM" id="CLU_040132_0_0_6"/>
<dbReference type="InParanoid" id="P46133"/>
<dbReference type="OMA" id="LMYKMAS"/>
<dbReference type="OrthoDB" id="3314392at2"/>
<dbReference type="PhylomeDB" id="P46133"/>
<dbReference type="BioCyc" id="EcoCyc:ABGT-MONOMER"/>
<dbReference type="BioCyc" id="MetaCyc:ABGT-MONOMER"/>
<dbReference type="PRO" id="PR:P46133"/>
<dbReference type="Proteomes" id="UP000000625">
    <property type="component" value="Chromosome"/>
</dbReference>
<dbReference type="GO" id="GO:0005886">
    <property type="term" value="C:plasma membrane"/>
    <property type="evidence" value="ECO:0000314"/>
    <property type="project" value="EcoCyc"/>
</dbReference>
<dbReference type="GO" id="GO:0015558">
    <property type="term" value="F:secondary active p-aminobenzoyl-glutamate transmembrane transporter activity"/>
    <property type="evidence" value="ECO:0000315"/>
    <property type="project" value="EcoCyc"/>
</dbReference>
<dbReference type="GO" id="GO:0015291">
    <property type="term" value="F:secondary active transmembrane transporter activity"/>
    <property type="evidence" value="ECO:0000314"/>
    <property type="project" value="EcoCyc"/>
</dbReference>
<dbReference type="GO" id="GO:0015293">
    <property type="term" value="F:symporter activity"/>
    <property type="evidence" value="ECO:0007669"/>
    <property type="project" value="UniProtKB-KW"/>
</dbReference>
<dbReference type="GO" id="GO:0006865">
    <property type="term" value="P:amino acid transport"/>
    <property type="evidence" value="ECO:0007669"/>
    <property type="project" value="UniProtKB-KW"/>
</dbReference>
<dbReference type="GO" id="GO:1902604">
    <property type="term" value="P:p-aminobenzoyl-glutamate transmembrane transport"/>
    <property type="evidence" value="ECO:0007669"/>
    <property type="project" value="InterPro"/>
</dbReference>
<dbReference type="GO" id="GO:0015814">
    <property type="term" value="P:p-aminobenzoyl-glutamate transport"/>
    <property type="evidence" value="ECO:0000315"/>
    <property type="project" value="EcoCyc"/>
</dbReference>
<dbReference type="InterPro" id="IPR004697">
    <property type="entry name" value="AbgT"/>
</dbReference>
<dbReference type="InterPro" id="IPR011540">
    <property type="entry name" value="AbgT_Proteobac"/>
</dbReference>
<dbReference type="NCBIfam" id="NF008459">
    <property type="entry name" value="PRK11339.1"/>
    <property type="match status" value="1"/>
</dbReference>
<dbReference type="NCBIfam" id="TIGR00819">
    <property type="entry name" value="ydaH"/>
    <property type="match status" value="1"/>
</dbReference>
<dbReference type="PANTHER" id="PTHR30282">
    <property type="entry name" value="P-AMINOBENZOYL GLUTAMATE TRANSPORTER"/>
    <property type="match status" value="1"/>
</dbReference>
<dbReference type="PANTHER" id="PTHR30282:SF0">
    <property type="entry name" value="P-AMINOBENZOYL-GLUTAMATE TRANSPORT PROTEIN"/>
    <property type="match status" value="1"/>
</dbReference>
<dbReference type="Pfam" id="PF03806">
    <property type="entry name" value="ABG_transport"/>
    <property type="match status" value="1"/>
</dbReference>
<keyword id="KW-0029">Amino-acid transport</keyword>
<keyword id="KW-0997">Cell inner membrane</keyword>
<keyword id="KW-1003">Cell membrane</keyword>
<keyword id="KW-0472">Membrane</keyword>
<keyword id="KW-1185">Reference proteome</keyword>
<keyword id="KW-0769">Symport</keyword>
<keyword id="KW-0812">Transmembrane</keyword>
<keyword id="KW-1133">Transmembrane helix</keyword>
<keyword id="KW-0813">Transport</keyword>